<sequence>MSMFNKVTKTFQWGDKTVVMETGEIARQATGAVLVNIDDTVVLATVVASKSAKPGQDFFPLTVDYIEKTYAAGKIPGSFFKREAKPSELETLTSRLIDRPIRPLFPEGFYNEVHVVIHTVSLNPEVDADIAAMIAVSAALSVSGIPFNGPIGAARVGYINGEYVLNPGQTARKNSQMDLVVAGTEAAVLMVESEAQQLSEDIMLGAVVFGHEQGRIAINAIHELVRDAGKPVWDWQPAAKDEPFIAKVTQLAEEKLRAAYQIRSKQARTQALREASASVLESLKAEGADFDAVKVEALLFDIEAKIVRSQILAGEPRIDGRDTRTVRPIEIRNSVLPRTHGSALFTRGETQALVVSTLGTERDAQRIDALAGEFEDRFMFHYNMPPFATGEVGRMGSTKRREIGHGRLAKRALVAVLPTKEEFPYTIRVVSEITESNGSSSMASVCGGCLSMMDAGVPMKAHVAGIAMGLIKEDNRFAVLTDILGDEDHLGDMDFKVAGTTAGITALQMDIKIQGITKEIMQVALAQAKEARLHILGKMQEAMGEAKTEVSSFAPKLYTMKINPEKIRDVIGKGGAVIRALTEETGTQINIDEDGTITIASTDSAKADEAKRRIEQITAEVEIGKIYEGPVVKILDFGALINLLPGKDGLLHISQIAHERVEKVTDYLTEGQVVKVKVLETDEKGRVKLSMRALLDRPMGDSGRPAPAERGERGDRGDRGDRPERGERRERREPAGADQQQQQQQSTGAGEHSGQMDA</sequence>
<reference key="1">
    <citation type="submission" date="2006-12" db="EMBL/GenBank/DDBJ databases">
        <title>Complete sequence of Acidovorax avenae subsp. citrulli AAC00-1.</title>
        <authorList>
            <person name="Copeland A."/>
            <person name="Lucas S."/>
            <person name="Lapidus A."/>
            <person name="Barry K."/>
            <person name="Detter J.C."/>
            <person name="Glavina del Rio T."/>
            <person name="Dalin E."/>
            <person name="Tice H."/>
            <person name="Pitluck S."/>
            <person name="Kiss H."/>
            <person name="Brettin T."/>
            <person name="Bruce D."/>
            <person name="Han C."/>
            <person name="Tapia R."/>
            <person name="Gilna P."/>
            <person name="Schmutz J."/>
            <person name="Larimer F."/>
            <person name="Land M."/>
            <person name="Hauser L."/>
            <person name="Kyrpides N."/>
            <person name="Kim E."/>
            <person name="Stahl D."/>
            <person name="Richardson P."/>
        </authorList>
    </citation>
    <scope>NUCLEOTIDE SEQUENCE [LARGE SCALE GENOMIC DNA]</scope>
    <source>
        <strain>AAC00-1</strain>
    </source>
</reference>
<accession>A1TLL2</accession>
<protein>
    <recommendedName>
        <fullName evidence="1">Polyribonucleotide nucleotidyltransferase</fullName>
        <ecNumber evidence="1">2.7.7.8</ecNumber>
    </recommendedName>
    <alternativeName>
        <fullName evidence="1">Polynucleotide phosphorylase</fullName>
        <shortName evidence="1">PNPase</shortName>
    </alternativeName>
</protein>
<dbReference type="EC" id="2.7.7.8" evidence="1"/>
<dbReference type="EMBL" id="CP000512">
    <property type="protein sequence ID" value="ABM31850.1"/>
    <property type="molecule type" value="Genomic_DNA"/>
</dbReference>
<dbReference type="RefSeq" id="WP_011794402.1">
    <property type="nucleotide sequence ID" value="NC_008752.1"/>
</dbReference>
<dbReference type="SMR" id="A1TLL2"/>
<dbReference type="STRING" id="397945.Aave_1259"/>
<dbReference type="GeneID" id="79790921"/>
<dbReference type="KEGG" id="aav:Aave_1259"/>
<dbReference type="eggNOG" id="COG1185">
    <property type="taxonomic scope" value="Bacteria"/>
</dbReference>
<dbReference type="HOGENOM" id="CLU_004217_2_2_4"/>
<dbReference type="OrthoDB" id="9804305at2"/>
<dbReference type="Proteomes" id="UP000002596">
    <property type="component" value="Chromosome"/>
</dbReference>
<dbReference type="GO" id="GO:0005829">
    <property type="term" value="C:cytosol"/>
    <property type="evidence" value="ECO:0007669"/>
    <property type="project" value="TreeGrafter"/>
</dbReference>
<dbReference type="GO" id="GO:0000175">
    <property type="term" value="F:3'-5'-RNA exonuclease activity"/>
    <property type="evidence" value="ECO:0007669"/>
    <property type="project" value="TreeGrafter"/>
</dbReference>
<dbReference type="GO" id="GO:0000287">
    <property type="term" value="F:magnesium ion binding"/>
    <property type="evidence" value="ECO:0007669"/>
    <property type="project" value="UniProtKB-UniRule"/>
</dbReference>
<dbReference type="GO" id="GO:0004654">
    <property type="term" value="F:polyribonucleotide nucleotidyltransferase activity"/>
    <property type="evidence" value="ECO:0007669"/>
    <property type="project" value="UniProtKB-UniRule"/>
</dbReference>
<dbReference type="GO" id="GO:0003723">
    <property type="term" value="F:RNA binding"/>
    <property type="evidence" value="ECO:0007669"/>
    <property type="project" value="UniProtKB-UniRule"/>
</dbReference>
<dbReference type="GO" id="GO:0006402">
    <property type="term" value="P:mRNA catabolic process"/>
    <property type="evidence" value="ECO:0007669"/>
    <property type="project" value="UniProtKB-UniRule"/>
</dbReference>
<dbReference type="GO" id="GO:0006396">
    <property type="term" value="P:RNA processing"/>
    <property type="evidence" value="ECO:0007669"/>
    <property type="project" value="InterPro"/>
</dbReference>
<dbReference type="CDD" id="cd02393">
    <property type="entry name" value="KH-I_PNPase"/>
    <property type="match status" value="1"/>
</dbReference>
<dbReference type="CDD" id="cd11363">
    <property type="entry name" value="RNase_PH_PNPase_1"/>
    <property type="match status" value="1"/>
</dbReference>
<dbReference type="CDD" id="cd11364">
    <property type="entry name" value="RNase_PH_PNPase_2"/>
    <property type="match status" value="1"/>
</dbReference>
<dbReference type="CDD" id="cd04472">
    <property type="entry name" value="S1_PNPase"/>
    <property type="match status" value="1"/>
</dbReference>
<dbReference type="FunFam" id="2.40.50.140:FF:000023">
    <property type="entry name" value="Polyribonucleotide nucleotidyltransferase"/>
    <property type="match status" value="1"/>
</dbReference>
<dbReference type="FunFam" id="3.30.1370.10:FF:000001">
    <property type="entry name" value="Polyribonucleotide nucleotidyltransferase"/>
    <property type="match status" value="1"/>
</dbReference>
<dbReference type="FunFam" id="3.30.230.70:FF:000001">
    <property type="entry name" value="Polyribonucleotide nucleotidyltransferase"/>
    <property type="match status" value="1"/>
</dbReference>
<dbReference type="FunFam" id="3.30.230.70:FF:000002">
    <property type="entry name" value="Polyribonucleotide nucleotidyltransferase"/>
    <property type="match status" value="1"/>
</dbReference>
<dbReference type="Gene3D" id="3.30.230.70">
    <property type="entry name" value="GHMP Kinase, N-terminal domain"/>
    <property type="match status" value="2"/>
</dbReference>
<dbReference type="Gene3D" id="3.30.1370.10">
    <property type="entry name" value="K Homology domain, type 1"/>
    <property type="match status" value="1"/>
</dbReference>
<dbReference type="Gene3D" id="2.40.50.140">
    <property type="entry name" value="Nucleic acid-binding proteins"/>
    <property type="match status" value="1"/>
</dbReference>
<dbReference type="HAMAP" id="MF_01595">
    <property type="entry name" value="PNPase"/>
    <property type="match status" value="1"/>
</dbReference>
<dbReference type="InterPro" id="IPR001247">
    <property type="entry name" value="ExoRNase_PH_dom1"/>
</dbReference>
<dbReference type="InterPro" id="IPR015847">
    <property type="entry name" value="ExoRNase_PH_dom2"/>
</dbReference>
<dbReference type="InterPro" id="IPR036345">
    <property type="entry name" value="ExoRNase_PH_dom2_sf"/>
</dbReference>
<dbReference type="InterPro" id="IPR004087">
    <property type="entry name" value="KH_dom"/>
</dbReference>
<dbReference type="InterPro" id="IPR004088">
    <property type="entry name" value="KH_dom_type_1"/>
</dbReference>
<dbReference type="InterPro" id="IPR036612">
    <property type="entry name" value="KH_dom_type_1_sf"/>
</dbReference>
<dbReference type="InterPro" id="IPR012340">
    <property type="entry name" value="NA-bd_OB-fold"/>
</dbReference>
<dbReference type="InterPro" id="IPR012162">
    <property type="entry name" value="PNPase"/>
</dbReference>
<dbReference type="InterPro" id="IPR027408">
    <property type="entry name" value="PNPase/RNase_PH_dom_sf"/>
</dbReference>
<dbReference type="InterPro" id="IPR015848">
    <property type="entry name" value="PNPase_PH_RNA-bd_bac/org-type"/>
</dbReference>
<dbReference type="InterPro" id="IPR036456">
    <property type="entry name" value="PNPase_PH_RNA-bd_sf"/>
</dbReference>
<dbReference type="InterPro" id="IPR020568">
    <property type="entry name" value="Ribosomal_Su5_D2-typ_SF"/>
</dbReference>
<dbReference type="InterPro" id="IPR003029">
    <property type="entry name" value="S1_domain"/>
</dbReference>
<dbReference type="NCBIfam" id="TIGR03591">
    <property type="entry name" value="polynuc_phos"/>
    <property type="match status" value="1"/>
</dbReference>
<dbReference type="NCBIfam" id="NF008805">
    <property type="entry name" value="PRK11824.1"/>
    <property type="match status" value="1"/>
</dbReference>
<dbReference type="PANTHER" id="PTHR11252">
    <property type="entry name" value="POLYRIBONUCLEOTIDE NUCLEOTIDYLTRANSFERASE"/>
    <property type="match status" value="1"/>
</dbReference>
<dbReference type="PANTHER" id="PTHR11252:SF0">
    <property type="entry name" value="POLYRIBONUCLEOTIDE NUCLEOTIDYLTRANSFERASE 1, MITOCHONDRIAL"/>
    <property type="match status" value="1"/>
</dbReference>
<dbReference type="Pfam" id="PF00013">
    <property type="entry name" value="KH_1"/>
    <property type="match status" value="1"/>
</dbReference>
<dbReference type="Pfam" id="PF03726">
    <property type="entry name" value="PNPase"/>
    <property type="match status" value="1"/>
</dbReference>
<dbReference type="Pfam" id="PF01138">
    <property type="entry name" value="RNase_PH"/>
    <property type="match status" value="2"/>
</dbReference>
<dbReference type="Pfam" id="PF03725">
    <property type="entry name" value="RNase_PH_C"/>
    <property type="match status" value="2"/>
</dbReference>
<dbReference type="Pfam" id="PF00575">
    <property type="entry name" value="S1"/>
    <property type="match status" value="1"/>
</dbReference>
<dbReference type="PIRSF" id="PIRSF005499">
    <property type="entry name" value="PNPase"/>
    <property type="match status" value="1"/>
</dbReference>
<dbReference type="SMART" id="SM00322">
    <property type="entry name" value="KH"/>
    <property type="match status" value="1"/>
</dbReference>
<dbReference type="SMART" id="SM00316">
    <property type="entry name" value="S1"/>
    <property type="match status" value="1"/>
</dbReference>
<dbReference type="SUPFAM" id="SSF54791">
    <property type="entry name" value="Eukaryotic type KH-domain (KH-domain type I)"/>
    <property type="match status" value="1"/>
</dbReference>
<dbReference type="SUPFAM" id="SSF50249">
    <property type="entry name" value="Nucleic acid-binding proteins"/>
    <property type="match status" value="1"/>
</dbReference>
<dbReference type="SUPFAM" id="SSF46915">
    <property type="entry name" value="Polynucleotide phosphorylase/guanosine pentaphosphate synthase (PNPase/GPSI), domain 3"/>
    <property type="match status" value="1"/>
</dbReference>
<dbReference type="SUPFAM" id="SSF55666">
    <property type="entry name" value="Ribonuclease PH domain 2-like"/>
    <property type="match status" value="2"/>
</dbReference>
<dbReference type="SUPFAM" id="SSF54211">
    <property type="entry name" value="Ribosomal protein S5 domain 2-like"/>
    <property type="match status" value="2"/>
</dbReference>
<dbReference type="PROSITE" id="PS50084">
    <property type="entry name" value="KH_TYPE_1"/>
    <property type="match status" value="1"/>
</dbReference>
<dbReference type="PROSITE" id="PS50126">
    <property type="entry name" value="S1"/>
    <property type="match status" value="1"/>
</dbReference>
<organism>
    <name type="scientific">Paracidovorax citrulli (strain AAC00-1)</name>
    <name type="common">Acidovorax citrulli</name>
    <dbReference type="NCBI Taxonomy" id="397945"/>
    <lineage>
        <taxon>Bacteria</taxon>
        <taxon>Pseudomonadati</taxon>
        <taxon>Pseudomonadota</taxon>
        <taxon>Betaproteobacteria</taxon>
        <taxon>Burkholderiales</taxon>
        <taxon>Comamonadaceae</taxon>
        <taxon>Paracidovorax</taxon>
    </lineage>
</organism>
<gene>
    <name evidence="1" type="primary">pnp</name>
    <name type="ordered locus">Aave_1259</name>
</gene>
<proteinExistence type="inferred from homology"/>
<evidence type="ECO:0000255" key="1">
    <source>
        <dbReference type="HAMAP-Rule" id="MF_01595"/>
    </source>
</evidence>
<evidence type="ECO:0000256" key="2">
    <source>
        <dbReference type="SAM" id="MobiDB-lite"/>
    </source>
</evidence>
<keyword id="KW-0963">Cytoplasm</keyword>
<keyword id="KW-0460">Magnesium</keyword>
<keyword id="KW-0479">Metal-binding</keyword>
<keyword id="KW-0548">Nucleotidyltransferase</keyword>
<keyword id="KW-0694">RNA-binding</keyword>
<keyword id="KW-0808">Transferase</keyword>
<feature type="chain" id="PRO_0000329480" description="Polyribonucleotide nucleotidyltransferase">
    <location>
        <begin position="1"/>
        <end position="758"/>
    </location>
</feature>
<feature type="domain" description="KH" evidence="1">
    <location>
        <begin position="555"/>
        <end position="614"/>
    </location>
</feature>
<feature type="domain" description="S1 motif" evidence="1">
    <location>
        <begin position="624"/>
        <end position="692"/>
    </location>
</feature>
<feature type="region of interest" description="Disordered" evidence="2">
    <location>
        <begin position="692"/>
        <end position="758"/>
    </location>
</feature>
<feature type="compositionally biased region" description="Basic and acidic residues" evidence="2">
    <location>
        <begin position="707"/>
        <end position="735"/>
    </location>
</feature>
<feature type="compositionally biased region" description="Low complexity" evidence="2">
    <location>
        <begin position="736"/>
        <end position="745"/>
    </location>
</feature>
<feature type="binding site" evidence="1">
    <location>
        <position position="488"/>
    </location>
    <ligand>
        <name>Mg(2+)</name>
        <dbReference type="ChEBI" id="CHEBI:18420"/>
    </ligand>
</feature>
<feature type="binding site" evidence="1">
    <location>
        <position position="494"/>
    </location>
    <ligand>
        <name>Mg(2+)</name>
        <dbReference type="ChEBI" id="CHEBI:18420"/>
    </ligand>
</feature>
<name>PNP_PARC0</name>
<comment type="function">
    <text evidence="1">Involved in mRNA degradation. Catalyzes the phosphorolysis of single-stranded polyribonucleotides processively in the 3'- to 5'-direction.</text>
</comment>
<comment type="catalytic activity">
    <reaction evidence="1">
        <text>RNA(n+1) + phosphate = RNA(n) + a ribonucleoside 5'-diphosphate</text>
        <dbReference type="Rhea" id="RHEA:22096"/>
        <dbReference type="Rhea" id="RHEA-COMP:14527"/>
        <dbReference type="Rhea" id="RHEA-COMP:17342"/>
        <dbReference type="ChEBI" id="CHEBI:43474"/>
        <dbReference type="ChEBI" id="CHEBI:57930"/>
        <dbReference type="ChEBI" id="CHEBI:140395"/>
        <dbReference type="EC" id="2.7.7.8"/>
    </reaction>
</comment>
<comment type="cofactor">
    <cofactor evidence="1">
        <name>Mg(2+)</name>
        <dbReference type="ChEBI" id="CHEBI:18420"/>
    </cofactor>
</comment>
<comment type="subcellular location">
    <subcellularLocation>
        <location evidence="1">Cytoplasm</location>
    </subcellularLocation>
</comment>
<comment type="similarity">
    <text evidence="1">Belongs to the polyribonucleotide nucleotidyltransferase family.</text>
</comment>